<dbReference type="EC" id="3.1.3.66" evidence="4"/>
<dbReference type="EMBL" id="U96920">
    <property type="protein sequence ID" value="AAB72151.1"/>
    <property type="molecule type" value="mRNA"/>
</dbReference>
<dbReference type="EMBL" id="U96921">
    <property type="protein sequence ID" value="AAB72152.1"/>
    <property type="molecule type" value="mRNA"/>
</dbReference>
<dbReference type="RefSeq" id="NP_001418326.1">
    <molecule id="Q9QWG5-2"/>
    <property type="nucleotide sequence ID" value="NM_001431397.1"/>
</dbReference>
<dbReference type="RefSeq" id="NP_446369.1">
    <molecule id="Q9QWG5-2"/>
    <property type="nucleotide sequence ID" value="NM_053917.2"/>
</dbReference>
<dbReference type="RefSeq" id="XP_008770684.1">
    <molecule id="Q9QWG5-2"/>
    <property type="nucleotide sequence ID" value="XM_008772462.4"/>
</dbReference>
<dbReference type="RefSeq" id="XP_008770686.1">
    <property type="nucleotide sequence ID" value="XM_008772464.2"/>
</dbReference>
<dbReference type="RefSeq" id="XP_017456652.1">
    <property type="nucleotide sequence ID" value="XM_017601163.1"/>
</dbReference>
<dbReference type="RefSeq" id="XP_017456653.1">
    <property type="nucleotide sequence ID" value="XM_017601164.1"/>
</dbReference>
<dbReference type="RefSeq" id="XP_038953356.1">
    <molecule id="Q9QWG5-2"/>
    <property type="nucleotide sequence ID" value="XM_039097428.2"/>
</dbReference>
<dbReference type="RefSeq" id="XP_038953357.1">
    <molecule id="Q9QWG5-2"/>
    <property type="nucleotide sequence ID" value="XM_039097429.2"/>
</dbReference>
<dbReference type="RefSeq" id="XP_063133804.1">
    <molecule id="Q9QWG5-2"/>
    <property type="nucleotide sequence ID" value="XM_063277734.1"/>
</dbReference>
<dbReference type="RefSeq" id="XP_063133806.1">
    <molecule id="Q9QWG5-1"/>
    <property type="nucleotide sequence ID" value="XM_063277736.1"/>
</dbReference>
<dbReference type="SMR" id="Q9QWG5"/>
<dbReference type="FunCoup" id="Q9QWG5">
    <property type="interactions" value="1730"/>
</dbReference>
<dbReference type="STRING" id="10116.ENSRNOP00000025013"/>
<dbReference type="SwissLipids" id="SLP:000000896"/>
<dbReference type="iPTMnet" id="Q9QWG5"/>
<dbReference type="PhosphoSitePlus" id="Q9QWG5"/>
<dbReference type="PaxDb" id="10116-ENSRNOP00000025013"/>
<dbReference type="Ensembl" id="ENSRNOT00000024981.7">
    <molecule id="Q9QWG5-1"/>
    <property type="protein sequence ID" value="ENSRNOP00000024981.4"/>
    <property type="gene ID" value="ENSRNOG00000018382.7"/>
</dbReference>
<dbReference type="Ensembl" id="ENSRNOT00000025013.5">
    <molecule id="Q9QWG5-2"/>
    <property type="protein sequence ID" value="ENSRNOP00000025013.4"/>
    <property type="gene ID" value="ENSRNOG00000018382.7"/>
</dbReference>
<dbReference type="GeneID" id="116699"/>
<dbReference type="KEGG" id="rno:116699"/>
<dbReference type="AGR" id="RGD:620470"/>
<dbReference type="CTD" id="8821"/>
<dbReference type="RGD" id="620470">
    <property type="gene designation" value="Inpp4b"/>
</dbReference>
<dbReference type="eggNOG" id="KOG4428">
    <property type="taxonomic scope" value="Eukaryota"/>
</dbReference>
<dbReference type="GeneTree" id="ENSGT00940000157587"/>
<dbReference type="HOGENOM" id="CLU_007802_1_0_1"/>
<dbReference type="InParanoid" id="Q9QWG5"/>
<dbReference type="OMA" id="CSHRMAQ"/>
<dbReference type="OrthoDB" id="159395at2759"/>
<dbReference type="PhylomeDB" id="Q9QWG5"/>
<dbReference type="TreeFam" id="TF325637"/>
<dbReference type="BRENDA" id="3.1.3.66">
    <property type="organism ID" value="5301"/>
</dbReference>
<dbReference type="Reactome" id="R-RNO-1660499">
    <property type="pathway name" value="Synthesis of PIPs at the plasma membrane"/>
</dbReference>
<dbReference type="Reactome" id="R-RNO-1660516">
    <property type="pathway name" value="Synthesis of PIPs at the early endosome membrane"/>
</dbReference>
<dbReference type="Reactome" id="R-RNO-1855183">
    <property type="pathway name" value="Synthesis of IP2, IP, and Ins in the cytosol"/>
</dbReference>
<dbReference type="UniPathway" id="UPA00944"/>
<dbReference type="PRO" id="PR:Q9QWG5"/>
<dbReference type="Proteomes" id="UP000002494">
    <property type="component" value="Chromosome 19"/>
</dbReference>
<dbReference type="Bgee" id="ENSRNOG00000018382">
    <property type="expression patterns" value="Expressed in heart and 17 other cell types or tissues"/>
</dbReference>
<dbReference type="GO" id="GO:0005737">
    <property type="term" value="C:cytoplasm"/>
    <property type="evidence" value="ECO:0000318"/>
    <property type="project" value="GO_Central"/>
</dbReference>
<dbReference type="GO" id="GO:0017161">
    <property type="term" value="F:inositol-1,3,4-trisphosphate 4-phosphatase activity"/>
    <property type="evidence" value="ECO:0007669"/>
    <property type="project" value="RHEA"/>
</dbReference>
<dbReference type="GO" id="GO:0052828">
    <property type="term" value="F:inositol-3,4-bisphosphate 4-phosphatase activity"/>
    <property type="evidence" value="ECO:0007669"/>
    <property type="project" value="RHEA"/>
</dbReference>
<dbReference type="GO" id="GO:0008289">
    <property type="term" value="F:lipid binding"/>
    <property type="evidence" value="ECO:0000266"/>
    <property type="project" value="RGD"/>
</dbReference>
<dbReference type="GO" id="GO:0034593">
    <property type="term" value="F:phosphatidylinositol bisphosphate phosphatase activity"/>
    <property type="evidence" value="ECO:0000266"/>
    <property type="project" value="RGD"/>
</dbReference>
<dbReference type="GO" id="GO:0034594">
    <property type="term" value="F:phosphatidylinositol trisphosphate phosphatase activity"/>
    <property type="evidence" value="ECO:0000266"/>
    <property type="project" value="RGD"/>
</dbReference>
<dbReference type="GO" id="GO:0016316">
    <property type="term" value="F:phosphatidylinositol-3,4-bisphosphate 4-phosphatase activity"/>
    <property type="evidence" value="ECO:0000314"/>
    <property type="project" value="RGD"/>
</dbReference>
<dbReference type="GO" id="GO:0006874">
    <property type="term" value="P:intracellular calcium ion homeostasis"/>
    <property type="evidence" value="ECO:0000266"/>
    <property type="project" value="RGD"/>
</dbReference>
<dbReference type="GO" id="GO:0045671">
    <property type="term" value="P:negative regulation of osteoclast differentiation"/>
    <property type="evidence" value="ECO:0000266"/>
    <property type="project" value="RGD"/>
</dbReference>
<dbReference type="GO" id="GO:0046856">
    <property type="term" value="P:phosphatidylinositol dephosphorylation"/>
    <property type="evidence" value="ECO:0000314"/>
    <property type="project" value="MGI"/>
</dbReference>
<dbReference type="GO" id="GO:0046850">
    <property type="term" value="P:regulation of bone remodeling"/>
    <property type="evidence" value="ECO:0000266"/>
    <property type="project" value="RGD"/>
</dbReference>
<dbReference type="GO" id="GO:0046822">
    <property type="term" value="P:regulation of nucleocytoplasmic transport"/>
    <property type="evidence" value="ECO:0000266"/>
    <property type="project" value="RGD"/>
</dbReference>
<dbReference type="GO" id="GO:0051896">
    <property type="term" value="P:regulation of phosphatidylinositol 3-kinase/protein kinase B signal transduction"/>
    <property type="evidence" value="ECO:0000266"/>
    <property type="project" value="RGD"/>
</dbReference>
<dbReference type="CDD" id="cd04048">
    <property type="entry name" value="C2A_Copine"/>
    <property type="match status" value="1"/>
</dbReference>
<dbReference type="FunFam" id="2.60.40.150:FF:000143">
    <property type="entry name" value="Type II inositol 3,4-bisphosphate 4-phosphatase"/>
    <property type="match status" value="1"/>
</dbReference>
<dbReference type="Gene3D" id="2.60.40.150">
    <property type="entry name" value="C2 domain"/>
    <property type="match status" value="1"/>
</dbReference>
<dbReference type="InterPro" id="IPR000008">
    <property type="entry name" value="C2_dom"/>
</dbReference>
<dbReference type="InterPro" id="IPR035892">
    <property type="entry name" value="C2_domain_sf"/>
</dbReference>
<dbReference type="InterPro" id="IPR039034">
    <property type="entry name" value="INPP4"/>
</dbReference>
<dbReference type="PANTHER" id="PTHR12187">
    <property type="entry name" value="AGAP000124-PA"/>
    <property type="match status" value="1"/>
</dbReference>
<dbReference type="PANTHER" id="PTHR12187:SF3">
    <property type="entry name" value="INOSITOL POLYPHOSPHATE 4-PHOSPHATASE TYPE II"/>
    <property type="match status" value="1"/>
</dbReference>
<dbReference type="SUPFAM" id="SSF49562">
    <property type="entry name" value="C2 domain (Calcium/lipid-binding domain, CaLB)"/>
    <property type="match status" value="1"/>
</dbReference>
<dbReference type="PROSITE" id="PS50004">
    <property type="entry name" value="C2"/>
    <property type="match status" value="1"/>
</dbReference>
<feature type="chain" id="PRO_0000190239" description="Type II inositol 3,4-bisphosphate 4-phosphatase">
    <location>
        <begin position="1"/>
        <end position="928"/>
    </location>
</feature>
<feature type="domain" description="C2" evidence="2">
    <location>
        <begin position="23"/>
        <end position="165"/>
    </location>
</feature>
<feature type="region of interest" description="Disordered" evidence="3">
    <location>
        <begin position="1"/>
        <end position="23"/>
    </location>
</feature>
<feature type="region of interest" description="Disordered" evidence="3">
    <location>
        <begin position="481"/>
        <end position="516"/>
    </location>
</feature>
<feature type="region of interest" description="Disordered" evidence="3">
    <location>
        <begin position="548"/>
        <end position="575"/>
    </location>
</feature>
<feature type="compositionally biased region" description="Basic and acidic residues" evidence="3">
    <location>
        <begin position="1"/>
        <end position="13"/>
    </location>
</feature>
<feature type="compositionally biased region" description="Basic and acidic residues" evidence="3">
    <location>
        <begin position="506"/>
        <end position="516"/>
    </location>
</feature>
<feature type="compositionally biased region" description="Basic and acidic residues" evidence="3">
    <location>
        <begin position="548"/>
        <end position="563"/>
    </location>
</feature>
<feature type="splice variant" id="VSP_015249" description="In isoform 2." evidence="5">
    <original>REGCRIENVLKNIKCRRYAFNMLQLMAFPKCYRPPEGTYGKADT</original>
    <variation>SRQTQGALNESDDPETGCLSDNKPTSRHFYPVALLLVSSHLLVVWLILSLALLLAKYQ</variation>
    <location>
        <begin position="885"/>
        <end position="928"/>
    </location>
</feature>
<reference key="1">
    <citation type="journal article" date="1997" name="J. Biol. Chem.">
        <title>The cDNA cloning and characterization of inositol polyphosphate 4-phosphatase type II. Evidence for conserved alternative splicing in the 4-phosphatase family.</title>
        <authorList>
            <person name="Norris F.A."/>
            <person name="Atkins R.C."/>
            <person name="Majerus P.W."/>
        </authorList>
    </citation>
    <scope>NUCLEOTIDE SEQUENCE [MRNA] (ISOFORMS 1 AND 2)</scope>
    <scope>CATALYTIC ACTIVITY</scope>
    <scope>ACTIVITY REGULATION</scope>
    <scope>BIOPHYSICOCHEMICAL PROPERTIES</scope>
    <scope>PATHWAY</scope>
    <scope>FUNCTION</scope>
    <source>
        <tissue>Brain</tissue>
    </source>
</reference>
<protein>
    <recommendedName>
        <fullName>Type II inositol 3,4-bisphosphate 4-phosphatase</fullName>
        <ecNumber evidence="4">3.1.3.66</ecNumber>
    </recommendedName>
    <alternativeName>
        <fullName>Inositol polyphosphate 4-phosphatase type II</fullName>
    </alternativeName>
</protein>
<organism>
    <name type="scientific">Rattus norvegicus</name>
    <name type="common">Rat</name>
    <dbReference type="NCBI Taxonomy" id="10116"/>
    <lineage>
        <taxon>Eukaryota</taxon>
        <taxon>Metazoa</taxon>
        <taxon>Chordata</taxon>
        <taxon>Craniata</taxon>
        <taxon>Vertebrata</taxon>
        <taxon>Euteleostomi</taxon>
        <taxon>Mammalia</taxon>
        <taxon>Eutheria</taxon>
        <taxon>Euarchontoglires</taxon>
        <taxon>Glires</taxon>
        <taxon>Rodentia</taxon>
        <taxon>Myomorpha</taxon>
        <taxon>Muroidea</taxon>
        <taxon>Muridae</taxon>
        <taxon>Murinae</taxon>
        <taxon>Rattus</taxon>
    </lineage>
</organism>
<gene>
    <name type="primary">Inpp4b</name>
</gene>
<name>INP4B_RAT</name>
<proteinExistence type="evidence at protein level"/>
<sequence>MEIKEEGTSEEGQHFLPAAQANDPEDIQFTSIQKSPNEPQLEFILACKDLVAPVSDRKLNTVVQVSVIHPVEQTLTRYSSTEIVEGTKDPLFLTGVTFPSDYPIYEETRIKLTVYDVKDKPHDTIRTSVLPEHKDPPPEVARSFLGCASFKVGELLKSKEQLLSLSLRTSDGGKVVGTIEVSLVKMGEIEDGDTDHITTDVQGQKCALVYDSTAPESLSGKENLPFMNAVLRNPVCKLYRFPTSDNKWMRIREQMSESILSFHIPKELISLHIKEDLCRNQELKELGDLSPHWDNLRNNVLSHCDQMVTMYQDILTELSKETGSSFKSSSSKGEKTLEFVPINLHLQRMQVHSPHLKDALYDVITVGAPAAHFQGFKNGGLRKLLHRFETERRNTGYQFIYYSPENTAKAKEVLSSINQLQPLVATHADLLLTSASQHSPDSLRSSLKLLSEKTELFVHAFKDQLVRSALLALYTARPGGILRKPPSPKVSTEEKSSQHDSPQQLRRQDSIPHHSDYDEEEWDRVWANVGKSLNCIIAKVDKLIERDSRNDKSTGGDSSKDGDADPNLEDSLTSHPREDWYEQLHPLILTLKECMAEVVNRAKQSLTFVLLQELAYSLPQCLMLTLRRDIVFSQALAGLVCGFIIKLHTSLHDPGFLQQLHTVGLIVQYEGLLSTYSDEIGMLEDMAVGISDLRKVAFKITEATSNDVLPVLTGRREHYVVEVKLPATVFESLPLQIKEGQLLHVYPVLFNVGINEQQTLAERFGDVSLQESINQENFELVQEYYSIFMEKMPPDYISHFQEQNDLKGLLDNLHQNIQAKKRKNVEIMWLAATICRKLNGIRFTCCKSAKDRTSMSVTLEQCSILRDEHQLHKDFFIRALDCMRREGCRIENVLKNIKCRRYAFNMLQLMAFPKCYRPPEGTYGKADT</sequence>
<comment type="function">
    <text evidence="1 4">Catalyzes the hydrolysis of the 4-position phosphate of phosphatidylinositol 3,4-bisphosphate, inositol 1,3,4-trisphosphate and inositol 3,4-bisphosphate (PubMed:9295334). Plays a role in the late stages of macropinocytosis by dephosphorylating phosphatidylinositol 3,4-bisphosphate in membrane ruffles (By similarity). The lipid phosphatase activity is critical for tumor suppressor function. Antagonizes the PI3K-AKT/PKB signaling pathway by dephosphorylating phosphoinositides and thereby modulating cell cycle progression and cell survival (By similarity).</text>
</comment>
<comment type="catalytic activity">
    <reaction evidence="4">
        <text>a 1,2-diacyl-sn-glycero-3-phospho-(1D-myo-inositol-3,4-bisphosphate) + H2O = a 1,2-diacyl-sn-glycero-3-phospho-(1D-myo-inositol-3-phosphate) + phosphate</text>
        <dbReference type="Rhea" id="RHEA:17193"/>
        <dbReference type="ChEBI" id="CHEBI:15377"/>
        <dbReference type="ChEBI" id="CHEBI:43474"/>
        <dbReference type="ChEBI" id="CHEBI:57658"/>
        <dbReference type="ChEBI" id="CHEBI:58088"/>
        <dbReference type="EC" id="3.1.3.66"/>
    </reaction>
</comment>
<comment type="catalytic activity">
    <reaction evidence="4">
        <text>1D-myo-inositol 3,4-bisphosphate + H2O = 1D-myo-inositol 3-phosphate + phosphate</text>
        <dbReference type="Rhea" id="RHEA:43388"/>
        <dbReference type="ChEBI" id="CHEBI:15377"/>
        <dbReference type="ChEBI" id="CHEBI:43474"/>
        <dbReference type="ChEBI" id="CHEBI:58401"/>
        <dbReference type="ChEBI" id="CHEBI:83241"/>
    </reaction>
</comment>
<comment type="catalytic activity">
    <reaction evidence="4">
        <text>1D-myo-inositol 1,3,4-trisphosphate + H2O = 1D-myo-inositol 1,3-bisphosphate + phosphate</text>
        <dbReference type="Rhea" id="RHEA:43392"/>
        <dbReference type="ChEBI" id="CHEBI:15377"/>
        <dbReference type="ChEBI" id="CHEBI:43474"/>
        <dbReference type="ChEBI" id="CHEBI:58414"/>
        <dbReference type="ChEBI" id="CHEBI:83242"/>
    </reaction>
</comment>
<comment type="activity regulation">
    <text evidence="4">Strongly inhibited by inositol hexakisphosphate.</text>
</comment>
<comment type="biophysicochemical properties">
    <kinetics>
        <KM evidence="4">39 uM for inositol 3,4-bisphosphate</KM>
        <KM evidence="4">34 uM for inositol 1,3,4-trisphosphate</KM>
        <Vmax evidence="4">26.0 umol/min/mg enzyme with inositol 3,4-bisphosphate as substrate</Vmax>
        <Vmax evidence="4">22.0 umol/min/mg enzyme with inositol 1,3,4-trisphosphate as substrate</Vmax>
    </kinetics>
    <phDependence>
        <text evidence="4">Optimum pH is 7-8.</text>
    </phDependence>
</comment>
<comment type="pathway">
    <text evidence="4">Signal transduction; phosphatidylinositol signaling pathway.</text>
</comment>
<comment type="alternative products">
    <event type="alternative splicing"/>
    <isoform>
        <id>Q9QWG5-1</id>
        <name>1</name>
        <name>Alpha</name>
        <sequence type="displayed"/>
    </isoform>
    <isoform>
        <id>Q9QWG5-2</id>
        <name>2</name>
        <name>Beta</name>
        <sequence type="described" ref="VSP_015249"/>
    </isoform>
</comment>
<comment type="miscellaneous">
    <molecule>Isoform 2</molecule>
    <text evidence="6">Inactive.</text>
</comment>
<comment type="similarity">
    <text evidence="6">Belongs to the inositol 3,4-bisphosphate 4-phosphatase family.</text>
</comment>
<accession>Q9QWG5</accession>
<accession>O35825</accession>
<evidence type="ECO:0000250" key="1">
    <source>
        <dbReference type="UniProtKB" id="O15327"/>
    </source>
</evidence>
<evidence type="ECO:0000255" key="2">
    <source>
        <dbReference type="PROSITE-ProRule" id="PRU00041"/>
    </source>
</evidence>
<evidence type="ECO:0000256" key="3">
    <source>
        <dbReference type="SAM" id="MobiDB-lite"/>
    </source>
</evidence>
<evidence type="ECO:0000269" key="4">
    <source>
    </source>
</evidence>
<evidence type="ECO:0000303" key="5">
    <source>
    </source>
</evidence>
<evidence type="ECO:0000305" key="6"/>
<keyword id="KW-0025">Alternative splicing</keyword>
<keyword id="KW-0378">Hydrolase</keyword>
<keyword id="KW-0443">Lipid metabolism</keyword>
<keyword id="KW-1185">Reference proteome</keyword>